<name>PDLI3_HUMAN</name>
<organism>
    <name type="scientific">Homo sapiens</name>
    <name type="common">Human</name>
    <dbReference type="NCBI Taxonomy" id="9606"/>
    <lineage>
        <taxon>Eukaryota</taxon>
        <taxon>Metazoa</taxon>
        <taxon>Chordata</taxon>
        <taxon>Craniata</taxon>
        <taxon>Vertebrata</taxon>
        <taxon>Euteleostomi</taxon>
        <taxon>Mammalia</taxon>
        <taxon>Eutheria</taxon>
        <taxon>Euarchontoglires</taxon>
        <taxon>Primates</taxon>
        <taxon>Haplorrhini</taxon>
        <taxon>Catarrhini</taxon>
        <taxon>Hominidae</taxon>
        <taxon>Homo</taxon>
    </lineage>
</organism>
<evidence type="ECO:0000250" key="1"/>
<evidence type="ECO:0000250" key="2">
    <source>
        <dbReference type="UniProtKB" id="O70209"/>
    </source>
</evidence>
<evidence type="ECO:0000250" key="3">
    <source>
        <dbReference type="UniProtKB" id="Q66HS7"/>
    </source>
</evidence>
<evidence type="ECO:0000255" key="4">
    <source>
        <dbReference type="PROSITE-ProRule" id="PRU00125"/>
    </source>
</evidence>
<evidence type="ECO:0000255" key="5">
    <source>
        <dbReference type="PROSITE-ProRule" id="PRU00143"/>
    </source>
</evidence>
<evidence type="ECO:0000269" key="6">
    <source>
    </source>
</evidence>
<evidence type="ECO:0000269" key="7">
    <source>
    </source>
</evidence>
<evidence type="ECO:0000303" key="8">
    <source>
    </source>
</evidence>
<evidence type="ECO:0000303" key="9">
    <source>
    </source>
</evidence>
<evidence type="ECO:0000303" key="10">
    <source ref="4"/>
</evidence>
<evidence type="ECO:0000305" key="11"/>
<evidence type="ECO:0007744" key="12">
    <source>
    </source>
</evidence>
<keyword id="KW-0025">Alternative splicing</keyword>
<keyword id="KW-0963">Cytoplasm</keyword>
<keyword id="KW-0440">LIM domain</keyword>
<keyword id="KW-0479">Metal-binding</keyword>
<keyword id="KW-0597">Phosphoprotein</keyword>
<keyword id="KW-1267">Proteomics identification</keyword>
<keyword id="KW-1185">Reference proteome</keyword>
<keyword id="KW-0862">Zinc</keyword>
<proteinExistence type="evidence at protein level"/>
<accession>Q53GG5</accession>
<accession>B2R866</accession>
<accession>O43590</accession>
<accession>O60439</accession>
<accession>O60440</accession>
<accession>Q8N6Y6</accession>
<accession>Q9BVP4</accession>
<sequence length="364" mass="39232">MPQTVILPGPAPWGFRLSGGIDFNQPLVITRITPGSKAAAANLCPGDVILAIDGFGTESMTHADAQDRIKAAAHQLCLKIDRGETHLWSPQVSEDGKAHPFKINLESEPQDGNYFEHKHNIRPKPFVIPGRSSGCSTPSGIDCGSGRSTPSSVSTVSTICPGDLKVAAKLAPNIPLEMELPGVKIVHAQFNTPMQLYSDDNIMETLQGQVSTALGETPLMSEPTASVPPESDVYRMLHDNRNEPTQPRQSGSFRVLQGMVDDGSDDRPAGTRSVRAPVTKVHGGSGGAQRMPLCDKCGSGIVGAVVKARDKYRHPECFVCADCNLNLKQKGYFFIEGELYCETHARARTKPPEGYDTVTLYPKA</sequence>
<reference key="1">
    <citation type="journal article" date="1997" name="J. Cell Biol.">
        <title>Actinin-associated LIM protein: identification of a domain interaction between PDZ and spectrin-like repeat motifs.</title>
        <authorList>
            <person name="Xia H."/>
            <person name="Winokur S.T."/>
            <person name="Kuo W.-L."/>
            <person name="Altherr M.R."/>
            <person name="Bredt D.S."/>
        </authorList>
    </citation>
    <scope>NUCLEOTIDE SEQUENCE [MRNA] (ISOFORMS 1 AND 2)</scope>
    <scope>ALTERNATIVE SPLICING</scope>
    <scope>TISSUE SPECIFICITY</scope>
    <source>
        <tissue>Skeletal muscle</tissue>
    </source>
</reference>
<reference key="2">
    <citation type="journal article" date="1999" name="Neuromuscul. Disord.">
        <title>Exclusion of muscle specific actinin-associated LIM protein (ALP) gene from 4q35 facioscapulohumeral muscular dystrophy (FSHD) candidate genes.</title>
        <authorList>
            <person name="Bouju S."/>
            <person name="Pietu G."/>
            <person name="Le Cunff M."/>
            <person name="Cros N."/>
            <person name="Malzac P."/>
            <person name="Pellissier J.-F."/>
            <person name="Pons F."/>
            <person name="Leger J.-J."/>
            <person name="Auffray C."/>
            <person name="Dechesne C.A."/>
        </authorList>
    </citation>
    <scope>NUCLEOTIDE SEQUENCE [MRNA] (ISOFORM 1)</scope>
    <scope>SUBCELLULAR LOCATION</scope>
</reference>
<reference key="3">
    <citation type="journal article" date="2004" name="Nat. Genet.">
        <title>Complete sequencing and characterization of 21,243 full-length human cDNAs.</title>
        <authorList>
            <person name="Ota T."/>
            <person name="Suzuki Y."/>
            <person name="Nishikawa T."/>
            <person name="Otsuki T."/>
            <person name="Sugiyama T."/>
            <person name="Irie R."/>
            <person name="Wakamatsu A."/>
            <person name="Hayashi K."/>
            <person name="Sato H."/>
            <person name="Nagai K."/>
            <person name="Kimura K."/>
            <person name="Makita H."/>
            <person name="Sekine M."/>
            <person name="Obayashi M."/>
            <person name="Nishi T."/>
            <person name="Shibahara T."/>
            <person name="Tanaka T."/>
            <person name="Ishii S."/>
            <person name="Yamamoto J."/>
            <person name="Saito K."/>
            <person name="Kawai Y."/>
            <person name="Isono Y."/>
            <person name="Nakamura Y."/>
            <person name="Nagahari K."/>
            <person name="Murakami K."/>
            <person name="Yasuda T."/>
            <person name="Iwayanagi T."/>
            <person name="Wagatsuma M."/>
            <person name="Shiratori A."/>
            <person name="Sudo H."/>
            <person name="Hosoiri T."/>
            <person name="Kaku Y."/>
            <person name="Kodaira H."/>
            <person name="Kondo H."/>
            <person name="Sugawara M."/>
            <person name="Takahashi M."/>
            <person name="Kanda K."/>
            <person name="Yokoi T."/>
            <person name="Furuya T."/>
            <person name="Kikkawa E."/>
            <person name="Omura Y."/>
            <person name="Abe K."/>
            <person name="Kamihara K."/>
            <person name="Katsuta N."/>
            <person name="Sato K."/>
            <person name="Tanikawa M."/>
            <person name="Yamazaki M."/>
            <person name="Ninomiya K."/>
            <person name="Ishibashi T."/>
            <person name="Yamashita H."/>
            <person name="Murakawa K."/>
            <person name="Fujimori K."/>
            <person name="Tanai H."/>
            <person name="Kimata M."/>
            <person name="Watanabe M."/>
            <person name="Hiraoka S."/>
            <person name="Chiba Y."/>
            <person name="Ishida S."/>
            <person name="Ono Y."/>
            <person name="Takiguchi S."/>
            <person name="Watanabe S."/>
            <person name="Yosida M."/>
            <person name="Hotuta T."/>
            <person name="Kusano J."/>
            <person name="Kanehori K."/>
            <person name="Takahashi-Fujii A."/>
            <person name="Hara H."/>
            <person name="Tanase T.-O."/>
            <person name="Nomura Y."/>
            <person name="Togiya S."/>
            <person name="Komai F."/>
            <person name="Hara R."/>
            <person name="Takeuchi K."/>
            <person name="Arita M."/>
            <person name="Imose N."/>
            <person name="Musashino K."/>
            <person name="Yuuki H."/>
            <person name="Oshima A."/>
            <person name="Sasaki N."/>
            <person name="Aotsuka S."/>
            <person name="Yoshikawa Y."/>
            <person name="Matsunawa H."/>
            <person name="Ichihara T."/>
            <person name="Shiohata N."/>
            <person name="Sano S."/>
            <person name="Moriya S."/>
            <person name="Momiyama H."/>
            <person name="Satoh N."/>
            <person name="Takami S."/>
            <person name="Terashima Y."/>
            <person name="Suzuki O."/>
            <person name="Nakagawa S."/>
            <person name="Senoh A."/>
            <person name="Mizoguchi H."/>
            <person name="Goto Y."/>
            <person name="Shimizu F."/>
            <person name="Wakebe H."/>
            <person name="Hishigaki H."/>
            <person name="Watanabe T."/>
            <person name="Sugiyama A."/>
            <person name="Takemoto M."/>
            <person name="Kawakami B."/>
            <person name="Yamazaki M."/>
            <person name="Watanabe K."/>
            <person name="Kumagai A."/>
            <person name="Itakura S."/>
            <person name="Fukuzumi Y."/>
            <person name="Fujimori Y."/>
            <person name="Komiyama M."/>
            <person name="Tashiro H."/>
            <person name="Tanigami A."/>
            <person name="Fujiwara T."/>
            <person name="Ono T."/>
            <person name="Yamada K."/>
            <person name="Fujii Y."/>
            <person name="Ozaki K."/>
            <person name="Hirao M."/>
            <person name="Ohmori Y."/>
            <person name="Kawabata A."/>
            <person name="Hikiji T."/>
            <person name="Kobatake N."/>
            <person name="Inagaki H."/>
            <person name="Ikema Y."/>
            <person name="Okamoto S."/>
            <person name="Okitani R."/>
            <person name="Kawakami T."/>
            <person name="Noguchi S."/>
            <person name="Itoh T."/>
            <person name="Shigeta K."/>
            <person name="Senba T."/>
            <person name="Matsumura K."/>
            <person name="Nakajima Y."/>
            <person name="Mizuno T."/>
            <person name="Morinaga M."/>
            <person name="Sasaki M."/>
            <person name="Togashi T."/>
            <person name="Oyama M."/>
            <person name="Hata H."/>
            <person name="Watanabe M."/>
            <person name="Komatsu T."/>
            <person name="Mizushima-Sugano J."/>
            <person name="Satoh T."/>
            <person name="Shirai Y."/>
            <person name="Takahashi Y."/>
            <person name="Nakagawa K."/>
            <person name="Okumura K."/>
            <person name="Nagase T."/>
            <person name="Nomura N."/>
            <person name="Kikuchi H."/>
            <person name="Masuho Y."/>
            <person name="Yamashita R."/>
            <person name="Nakai K."/>
            <person name="Yada T."/>
            <person name="Nakamura Y."/>
            <person name="Ohara O."/>
            <person name="Isogai T."/>
            <person name="Sugano S."/>
        </authorList>
    </citation>
    <scope>NUCLEOTIDE SEQUENCE [LARGE SCALE MRNA]</scope>
</reference>
<reference key="4">
    <citation type="submission" date="2003-05" db="EMBL/GenBank/DDBJ databases">
        <title>Cloning of human full-length CDSs in BD Creator(TM) system donor vector.</title>
        <authorList>
            <person name="Kalnine N."/>
            <person name="Chen X."/>
            <person name="Rolfs A."/>
            <person name="Halleck A."/>
            <person name="Hines L."/>
            <person name="Eisenstein S."/>
            <person name="Koundinya M."/>
            <person name="Raphael J."/>
            <person name="Moreira D."/>
            <person name="Kelley T."/>
            <person name="LaBaer J."/>
            <person name="Lin Y."/>
            <person name="Phelan M."/>
            <person name="Farmer A."/>
        </authorList>
    </citation>
    <scope>NUCLEOTIDE SEQUENCE [LARGE SCALE MRNA] (ISOFORM 3)</scope>
</reference>
<reference key="5">
    <citation type="submission" date="2005-04" db="EMBL/GenBank/DDBJ databases">
        <authorList>
            <person name="Suzuki Y."/>
            <person name="Sugano S."/>
            <person name="Totoki Y."/>
            <person name="Toyoda A."/>
            <person name="Takeda T."/>
            <person name="Sakaki Y."/>
            <person name="Tanaka A."/>
            <person name="Yokoyama S."/>
        </authorList>
    </citation>
    <scope>NUCLEOTIDE SEQUENCE [LARGE SCALE MRNA] (ISOFORM 1)</scope>
    <source>
        <tissue>Heart</tissue>
    </source>
</reference>
<reference key="6">
    <citation type="submission" date="2005-09" db="EMBL/GenBank/DDBJ databases">
        <authorList>
            <person name="Mural R.J."/>
            <person name="Istrail S."/>
            <person name="Sutton G.G."/>
            <person name="Florea L."/>
            <person name="Halpern A.L."/>
            <person name="Mobarry C.M."/>
            <person name="Lippert R."/>
            <person name="Walenz B."/>
            <person name="Shatkay H."/>
            <person name="Dew I."/>
            <person name="Miller J.R."/>
            <person name="Flanigan M.J."/>
            <person name="Edwards N.J."/>
            <person name="Bolanos R."/>
            <person name="Fasulo D."/>
            <person name="Halldorsson B.V."/>
            <person name="Hannenhalli S."/>
            <person name="Turner R."/>
            <person name="Yooseph S."/>
            <person name="Lu F."/>
            <person name="Nusskern D.R."/>
            <person name="Shue B.C."/>
            <person name="Zheng X.H."/>
            <person name="Zhong F."/>
            <person name="Delcher A.L."/>
            <person name="Huson D.H."/>
            <person name="Kravitz S.A."/>
            <person name="Mouchard L."/>
            <person name="Reinert K."/>
            <person name="Remington K.A."/>
            <person name="Clark A.G."/>
            <person name="Waterman M.S."/>
            <person name="Eichler E.E."/>
            <person name="Adams M.D."/>
            <person name="Hunkapiller M.W."/>
            <person name="Myers E.W."/>
            <person name="Venter J.C."/>
        </authorList>
    </citation>
    <scope>NUCLEOTIDE SEQUENCE [LARGE SCALE GENOMIC DNA]</scope>
</reference>
<reference key="7">
    <citation type="journal article" date="2004" name="Genome Res.">
        <title>The status, quality, and expansion of the NIH full-length cDNA project: the Mammalian Gene Collection (MGC).</title>
        <authorList>
            <consortium name="The MGC Project Team"/>
        </authorList>
    </citation>
    <scope>NUCLEOTIDE SEQUENCE [LARGE SCALE MRNA] (ISOFORMS 2 AND 3)</scope>
    <source>
        <tissue>Lung</tissue>
        <tissue>Skin</tissue>
    </source>
</reference>
<reference key="8">
    <citation type="journal article" date="2011" name="BMC Syst. Biol.">
        <title>Initial characterization of the human central proteome.</title>
        <authorList>
            <person name="Burkard T.R."/>
            <person name="Planyavsky M."/>
            <person name="Kaupe I."/>
            <person name="Breitwieser F.P."/>
            <person name="Buerckstuemmer T."/>
            <person name="Bennett K.L."/>
            <person name="Superti-Furga G."/>
            <person name="Colinge J."/>
        </authorList>
    </citation>
    <scope>IDENTIFICATION BY MASS SPECTROMETRY [LARGE SCALE ANALYSIS]</scope>
</reference>
<reference key="9">
    <citation type="journal article" date="2014" name="J. Proteomics">
        <title>An enzyme assisted RP-RPLC approach for in-depth analysis of human liver phosphoproteome.</title>
        <authorList>
            <person name="Bian Y."/>
            <person name="Song C."/>
            <person name="Cheng K."/>
            <person name="Dong M."/>
            <person name="Wang F."/>
            <person name="Huang J."/>
            <person name="Sun D."/>
            <person name="Wang L."/>
            <person name="Ye M."/>
            <person name="Zou H."/>
        </authorList>
    </citation>
    <scope>PHOSPHORYLATION [LARGE SCALE ANALYSIS] AT SER-93</scope>
    <scope>IDENTIFICATION BY MASS SPECTROMETRY [LARGE SCALE ANALYSIS]</scope>
    <source>
        <tissue>Liver</tissue>
    </source>
</reference>
<comment type="function">
    <text evidence="1">May play a role in the organization of actin filament arrays within muscle cells.</text>
</comment>
<comment type="subunit">
    <text evidence="2 3">Interacts with ACTN2 (By similarity). Forms a heterodimer with PDLIM4 (via LIM domain) (By similarity).</text>
</comment>
<comment type="interaction">
    <interactant intactId="EBI-5658852">
        <id>Q53GG5</id>
    </interactant>
    <interactant intactId="EBI-77797">
        <id>P35609</id>
        <label>ACTN2</label>
    </interactant>
    <organismsDiffer>false</organismsDiffer>
    <experiments>6</experiments>
</comment>
<comment type="interaction">
    <interactant intactId="EBI-5658852">
        <id>Q53GG5</id>
    </interactant>
    <interactant intactId="EBI-973138">
        <id>P49792</id>
        <label>RANBP2</label>
    </interactant>
    <organismsDiffer>false</organismsDiffer>
    <experiments>3</experiments>
</comment>
<comment type="interaction">
    <interactant intactId="EBI-12702438">
        <id>Q53GG5-2</id>
    </interactant>
    <interactant intactId="EBI-77797">
        <id>P35609</id>
        <label>ACTN2</label>
    </interactant>
    <organismsDiffer>false</organismsDiffer>
    <experiments>3</experiments>
</comment>
<comment type="subcellular location">
    <subcellularLocation>
        <location evidence="6">Cytoplasm</location>
        <location evidence="6">Myofibril</location>
        <location evidence="6">Sarcomere</location>
        <location evidence="6">Z line</location>
    </subcellularLocation>
    <text>Localizes to myofiber Z-lines.</text>
</comment>
<comment type="alternative products">
    <event type="alternative splicing"/>
    <isoform>
        <id>Q53GG5-1</id>
        <name>1</name>
        <name>ALP-SK</name>
        <sequence type="displayed"/>
    </isoform>
    <isoform>
        <id>Q53GG5-2</id>
        <name>2</name>
        <name>ALP-H</name>
        <sequence type="described" ref="VSP_016501"/>
    </isoform>
    <isoform>
        <id>Q53GG5-3</id>
        <name>3</name>
        <sequence type="described" ref="VSP_016500 VSP_016502"/>
    </isoform>
</comment>
<comment type="tissue specificity">
    <text evidence="7">Isoform 1 is highly expressed in differentiated skeletal muscle. Isoform 2 is heart-specific.</text>
</comment>
<feature type="chain" id="PRO_0000075867" description="PDZ and LIM domain protein 3">
    <location>
        <begin position="1"/>
        <end position="364"/>
    </location>
</feature>
<feature type="domain" description="PDZ" evidence="5">
    <location>
        <begin position="1"/>
        <end position="84"/>
    </location>
</feature>
<feature type="domain" description="LIM zinc-binding" evidence="4">
    <location>
        <begin position="292"/>
        <end position="351"/>
    </location>
</feature>
<feature type="modified residue" description="Phosphoserine" evidence="3">
    <location>
        <position position="18"/>
    </location>
</feature>
<feature type="modified residue" description="Phosphoserine" evidence="12">
    <location>
        <position position="93"/>
    </location>
</feature>
<feature type="modified residue" description="Phosphoserine" evidence="3">
    <location>
        <position position="264"/>
    </location>
</feature>
<feature type="splice variant" id="VSP_016500" description="In isoform 3." evidence="8 10">
    <original>DGNYFEHKHNIRPKPFVIPGRSSGCSTPSGIDCGSGRSTPSSVSTVSTICPGDLKVAAKLAPNIPLEMELPGVKIVHAQFNTPMQLYSDDNIMETLQGQVSTALGETPLMSEPTASVPPESDV</original>
    <variation>EFKPIGTAHNRRAQPFVAAANIDDKRQVVSASYNSPIGLYSTSNIQDALHGQLRGLIPSSPQKTGTTLNTSIIFGPNLS</variation>
    <location>
        <begin position="111"/>
        <end position="233"/>
    </location>
</feature>
<feature type="splice variant" id="VSP_016501" description="In isoform 2." evidence="8 9">
    <original>DGNYFEHKHNIRPKPFVIPGRSSGCSTPSGIDCGSGRSTPSSVSTVSTICPGDLKVAAKLAPNIPLEMELPGVKIVHAQFNTPMQLYSDDNIMETLQGQVSTALGETPLMSEPT</original>
    <variation>EFKPIGTAHNRRAQPFVAAANIDDKRQVVSASYNSPIGLYSTSNIQDALHGQLRGLIPSSPQNEPT</variation>
    <location>
        <begin position="111"/>
        <end position="224"/>
    </location>
</feature>
<feature type="splice variant" id="VSP_016502" description="In isoform 3." evidence="8 10">
    <location>
        <begin position="234"/>
        <end position="364"/>
    </location>
</feature>
<feature type="sequence variant" id="VAR_050166" description="In dbSNP:rs11944325.">
    <original>V</original>
    <variation>M</variation>
    <location>
        <position position="127"/>
    </location>
</feature>
<feature type="sequence conflict" description="In Ref. 1; AAC16670/AAC16672." evidence="11" ref="1">
    <original>P</original>
    <variation>A</variation>
    <location>
        <position position="12"/>
    </location>
</feature>
<feature type="sequence conflict" description="In Ref. 1; AAC16670/AAC16672." evidence="11" ref="1">
    <original>A</original>
    <variation>G</variation>
    <location>
        <position position="40"/>
    </location>
</feature>
<feature type="sequence conflict" description="In Ref. 1; AAC16670." evidence="11" ref="1">
    <original>T</original>
    <variation>I</variation>
    <location>
        <position position="217"/>
    </location>
</feature>
<feature type="sequence conflict" description="In Ref. 2; AAB96665." evidence="11" ref="2">
    <original>S</original>
    <variation>N</variation>
    <location>
        <position position="221"/>
    </location>
</feature>
<feature type="sequence conflict" description="In Ref. 1; AAC16670/AAC16672." evidence="11" ref="1">
    <original>E</original>
    <variation>R</variation>
    <location>
        <position position="353"/>
    </location>
</feature>
<dbReference type="EMBL" id="AF002280">
    <property type="protein sequence ID" value="AAC16670.1"/>
    <property type="molecule type" value="mRNA"/>
</dbReference>
<dbReference type="EMBL" id="AF002282">
    <property type="protein sequence ID" value="AAC16672.1"/>
    <property type="molecule type" value="mRNA"/>
</dbReference>
<dbReference type="EMBL" id="AF039018">
    <property type="protein sequence ID" value="AAB96665.1"/>
    <property type="molecule type" value="mRNA"/>
</dbReference>
<dbReference type="EMBL" id="AK313253">
    <property type="protein sequence ID" value="BAG36063.1"/>
    <property type="molecule type" value="mRNA"/>
</dbReference>
<dbReference type="EMBL" id="BT007341">
    <property type="protein sequence ID" value="AAP36005.1"/>
    <property type="molecule type" value="mRNA"/>
</dbReference>
<dbReference type="EMBL" id="AK222966">
    <property type="protein sequence ID" value="BAD96686.1"/>
    <property type="molecule type" value="mRNA"/>
</dbReference>
<dbReference type="EMBL" id="CH471056">
    <property type="protein sequence ID" value="EAX04641.1"/>
    <property type="molecule type" value="Genomic_DNA"/>
</dbReference>
<dbReference type="EMBL" id="BC001017">
    <property type="status" value="NOT_ANNOTATED_CDS"/>
    <property type="molecule type" value="mRNA"/>
</dbReference>
<dbReference type="EMBL" id="BC027870">
    <property type="protein sequence ID" value="AAH27870.1"/>
    <property type="molecule type" value="mRNA"/>
</dbReference>
<dbReference type="CCDS" id="CCDS3844.1">
    <molecule id="Q53GG5-1"/>
</dbReference>
<dbReference type="CCDS" id="CCDS47172.1">
    <molecule id="Q53GG5-2"/>
</dbReference>
<dbReference type="RefSeq" id="NP_001107579.1">
    <molecule id="Q53GG5-2"/>
    <property type="nucleotide sequence ID" value="NM_001114107.5"/>
</dbReference>
<dbReference type="RefSeq" id="NP_055291.2">
    <molecule id="Q53GG5-1"/>
    <property type="nucleotide sequence ID" value="NM_014476.6"/>
</dbReference>
<dbReference type="RefSeq" id="XP_047306027.1">
    <molecule id="Q53GG5-3"/>
    <property type="nucleotide sequence ID" value="XM_047450071.1"/>
</dbReference>
<dbReference type="RefSeq" id="XP_047306028.1">
    <molecule id="Q53GG5-3"/>
    <property type="nucleotide sequence ID" value="XM_047450072.1"/>
</dbReference>
<dbReference type="RefSeq" id="XP_054205669.1">
    <molecule id="Q53GG5-3"/>
    <property type="nucleotide sequence ID" value="XM_054349694.1"/>
</dbReference>
<dbReference type="RefSeq" id="XP_054205670.1">
    <molecule id="Q53GG5-3"/>
    <property type="nucleotide sequence ID" value="XM_054349695.1"/>
</dbReference>
<dbReference type="BMRB" id="Q53GG5"/>
<dbReference type="SMR" id="Q53GG5"/>
<dbReference type="BioGRID" id="118119">
    <property type="interactions" value="27"/>
</dbReference>
<dbReference type="FunCoup" id="Q53GG5">
    <property type="interactions" value="70"/>
</dbReference>
<dbReference type="IntAct" id="Q53GG5">
    <property type="interactions" value="11"/>
</dbReference>
<dbReference type="STRING" id="9606.ENSP00000284767"/>
<dbReference type="GlyGen" id="Q53GG5">
    <property type="glycosylation" value="1 site"/>
</dbReference>
<dbReference type="iPTMnet" id="Q53GG5"/>
<dbReference type="PhosphoSitePlus" id="Q53GG5"/>
<dbReference type="BioMuta" id="PDLIM3"/>
<dbReference type="DMDM" id="74740479"/>
<dbReference type="jPOST" id="Q53GG5"/>
<dbReference type="MassIVE" id="Q53GG5"/>
<dbReference type="PaxDb" id="9606-ENSP00000284770"/>
<dbReference type="PeptideAtlas" id="Q53GG5"/>
<dbReference type="ProteomicsDB" id="62479">
    <molecule id="Q53GG5-1"/>
</dbReference>
<dbReference type="ProteomicsDB" id="62480">
    <molecule id="Q53GG5-2"/>
</dbReference>
<dbReference type="ProteomicsDB" id="62481">
    <molecule id="Q53GG5-3"/>
</dbReference>
<dbReference type="Pumba" id="Q53GG5"/>
<dbReference type="Antibodypedia" id="1500">
    <property type="antibodies" value="181 antibodies from 24 providers"/>
</dbReference>
<dbReference type="DNASU" id="27295"/>
<dbReference type="Ensembl" id="ENST00000284767.12">
    <molecule id="Q53GG5-1"/>
    <property type="protein sequence ID" value="ENSP00000284767.8"/>
    <property type="gene ID" value="ENSG00000154553.17"/>
</dbReference>
<dbReference type="Ensembl" id="ENST00000284771.7">
    <molecule id="Q53GG5-2"/>
    <property type="protein sequence ID" value="ENSP00000284771.6"/>
    <property type="gene ID" value="ENSG00000154553.17"/>
</dbReference>
<dbReference type="GeneID" id="27295"/>
<dbReference type="KEGG" id="hsa:27295"/>
<dbReference type="MANE-Select" id="ENST00000284767.12">
    <property type="protein sequence ID" value="ENSP00000284767.8"/>
    <property type="RefSeq nucleotide sequence ID" value="NM_014476.6"/>
    <property type="RefSeq protein sequence ID" value="NP_055291.2"/>
</dbReference>
<dbReference type="UCSC" id="uc003ixw.5">
    <molecule id="Q53GG5-1"/>
    <property type="organism name" value="human"/>
</dbReference>
<dbReference type="AGR" id="HGNC:20767"/>
<dbReference type="CTD" id="27295"/>
<dbReference type="DisGeNET" id="27295"/>
<dbReference type="GeneCards" id="PDLIM3"/>
<dbReference type="HGNC" id="HGNC:20767">
    <property type="gene designation" value="PDLIM3"/>
</dbReference>
<dbReference type="HPA" id="ENSG00000154553">
    <property type="expression patterns" value="Group enriched (skeletal muscle, tongue)"/>
</dbReference>
<dbReference type="MalaCards" id="PDLIM3"/>
<dbReference type="MIM" id="605889">
    <property type="type" value="gene"/>
</dbReference>
<dbReference type="neXtProt" id="NX_Q53GG5"/>
<dbReference type="OpenTargets" id="ENSG00000154553"/>
<dbReference type="PharmGKB" id="PA134970631"/>
<dbReference type="VEuPathDB" id="HostDB:ENSG00000154553"/>
<dbReference type="eggNOG" id="KOG1703">
    <property type="taxonomic scope" value="Eukaryota"/>
</dbReference>
<dbReference type="GeneTree" id="ENSGT00940000156741"/>
<dbReference type="InParanoid" id="Q53GG5"/>
<dbReference type="OMA" id="IHAQFNT"/>
<dbReference type="OrthoDB" id="1293114at2759"/>
<dbReference type="PAN-GO" id="Q53GG5">
    <property type="GO annotations" value="9 GO annotations based on evolutionary models"/>
</dbReference>
<dbReference type="PhylomeDB" id="Q53GG5"/>
<dbReference type="TreeFam" id="TF106408"/>
<dbReference type="PathwayCommons" id="Q53GG5"/>
<dbReference type="SignaLink" id="Q53GG5"/>
<dbReference type="BioGRID-ORCS" id="27295">
    <property type="hits" value="5 hits in 1141 CRISPR screens"/>
</dbReference>
<dbReference type="ChiTaRS" id="PDLIM3">
    <property type="organism name" value="human"/>
</dbReference>
<dbReference type="GeneWiki" id="PDLIM3"/>
<dbReference type="GenomeRNAi" id="27295"/>
<dbReference type="Pharos" id="Q53GG5">
    <property type="development level" value="Tbio"/>
</dbReference>
<dbReference type="PRO" id="PR:Q53GG5"/>
<dbReference type="Proteomes" id="UP000005640">
    <property type="component" value="Chromosome 4"/>
</dbReference>
<dbReference type="RNAct" id="Q53GG5">
    <property type="molecule type" value="protein"/>
</dbReference>
<dbReference type="Bgee" id="ENSG00000154553">
    <property type="expression patterns" value="Expressed in skeletal muscle tissue of biceps brachii and 179 other cell types or tissues"/>
</dbReference>
<dbReference type="ExpressionAtlas" id="Q53GG5">
    <property type="expression patterns" value="baseline and differential"/>
</dbReference>
<dbReference type="GO" id="GO:0005912">
    <property type="term" value="C:adherens junction"/>
    <property type="evidence" value="ECO:0000318"/>
    <property type="project" value="GO_Central"/>
</dbReference>
<dbReference type="GO" id="GO:0005829">
    <property type="term" value="C:cytosol"/>
    <property type="evidence" value="ECO:0000314"/>
    <property type="project" value="HPA"/>
</dbReference>
<dbReference type="GO" id="GO:0031941">
    <property type="term" value="C:filamentous actin"/>
    <property type="evidence" value="ECO:0000318"/>
    <property type="project" value="GO_Central"/>
</dbReference>
<dbReference type="GO" id="GO:0001725">
    <property type="term" value="C:stress fiber"/>
    <property type="evidence" value="ECO:0000318"/>
    <property type="project" value="GO_Central"/>
</dbReference>
<dbReference type="GO" id="GO:0030018">
    <property type="term" value="C:Z disc"/>
    <property type="evidence" value="ECO:0000318"/>
    <property type="project" value="GO_Central"/>
</dbReference>
<dbReference type="GO" id="GO:0003779">
    <property type="term" value="F:actin binding"/>
    <property type="evidence" value="ECO:0000318"/>
    <property type="project" value="GO_Central"/>
</dbReference>
<dbReference type="GO" id="GO:0046872">
    <property type="term" value="F:metal ion binding"/>
    <property type="evidence" value="ECO:0007669"/>
    <property type="project" value="UniProtKB-KW"/>
</dbReference>
<dbReference type="GO" id="GO:0051371">
    <property type="term" value="F:muscle alpha-actinin binding"/>
    <property type="evidence" value="ECO:0000318"/>
    <property type="project" value="GO_Central"/>
</dbReference>
<dbReference type="GO" id="GO:0008307">
    <property type="term" value="F:structural constituent of muscle"/>
    <property type="evidence" value="ECO:0007669"/>
    <property type="project" value="Ensembl"/>
</dbReference>
<dbReference type="GO" id="GO:0030036">
    <property type="term" value="P:actin cytoskeleton organization"/>
    <property type="evidence" value="ECO:0000318"/>
    <property type="project" value="GO_Central"/>
</dbReference>
<dbReference type="GO" id="GO:0007015">
    <property type="term" value="P:actin filament organization"/>
    <property type="evidence" value="ECO:0007669"/>
    <property type="project" value="Ensembl"/>
</dbReference>
<dbReference type="GO" id="GO:0007507">
    <property type="term" value="P:heart development"/>
    <property type="evidence" value="ECO:0000318"/>
    <property type="project" value="GO_Central"/>
</dbReference>
<dbReference type="GO" id="GO:0061061">
    <property type="term" value="P:muscle structure development"/>
    <property type="evidence" value="ECO:0000318"/>
    <property type="project" value="GO_Central"/>
</dbReference>
<dbReference type="CDD" id="cd09450">
    <property type="entry name" value="LIM_ALP"/>
    <property type="match status" value="1"/>
</dbReference>
<dbReference type="CDD" id="cd06753">
    <property type="entry name" value="PDZ_PDLIM-like"/>
    <property type="match status" value="1"/>
</dbReference>
<dbReference type="DisProt" id="DP01782"/>
<dbReference type="FunFam" id="2.10.110.10:FF:000026">
    <property type="entry name" value="PDZ and LIM domain protein 3"/>
    <property type="match status" value="1"/>
</dbReference>
<dbReference type="FunFam" id="2.30.42.10:FF:000055">
    <property type="entry name" value="PDZ and LIM domain protein 3"/>
    <property type="match status" value="1"/>
</dbReference>
<dbReference type="Gene3D" id="2.30.42.10">
    <property type="match status" value="1"/>
</dbReference>
<dbReference type="Gene3D" id="2.10.110.10">
    <property type="entry name" value="Cysteine Rich Protein"/>
    <property type="match status" value="1"/>
</dbReference>
<dbReference type="InterPro" id="IPR031847">
    <property type="entry name" value="PDLI1-4/Zasp-like_mid"/>
</dbReference>
<dbReference type="InterPro" id="IPR001478">
    <property type="entry name" value="PDZ"/>
</dbReference>
<dbReference type="InterPro" id="IPR050604">
    <property type="entry name" value="PDZ-LIM_domain"/>
</dbReference>
<dbReference type="InterPro" id="IPR036034">
    <property type="entry name" value="PDZ_sf"/>
</dbReference>
<dbReference type="InterPro" id="IPR006643">
    <property type="entry name" value="Zasp-like_motif"/>
</dbReference>
<dbReference type="InterPro" id="IPR001781">
    <property type="entry name" value="Znf_LIM"/>
</dbReference>
<dbReference type="PANTHER" id="PTHR24214:SF7">
    <property type="entry name" value="PDZ AND LIM DOMAIN PROTEIN 3"/>
    <property type="match status" value="1"/>
</dbReference>
<dbReference type="PANTHER" id="PTHR24214">
    <property type="entry name" value="PDZ AND LIM DOMAIN PROTEIN ZASP"/>
    <property type="match status" value="1"/>
</dbReference>
<dbReference type="Pfam" id="PF15936">
    <property type="entry name" value="DUF4749"/>
    <property type="match status" value="1"/>
</dbReference>
<dbReference type="Pfam" id="PF00412">
    <property type="entry name" value="LIM"/>
    <property type="match status" value="1"/>
</dbReference>
<dbReference type="Pfam" id="PF00595">
    <property type="entry name" value="PDZ"/>
    <property type="match status" value="1"/>
</dbReference>
<dbReference type="SMART" id="SM00132">
    <property type="entry name" value="LIM"/>
    <property type="match status" value="1"/>
</dbReference>
<dbReference type="SMART" id="SM00228">
    <property type="entry name" value="PDZ"/>
    <property type="match status" value="1"/>
</dbReference>
<dbReference type="SMART" id="SM00735">
    <property type="entry name" value="ZM"/>
    <property type="match status" value="1"/>
</dbReference>
<dbReference type="SUPFAM" id="SSF57716">
    <property type="entry name" value="Glucocorticoid receptor-like (DNA-binding domain)"/>
    <property type="match status" value="2"/>
</dbReference>
<dbReference type="SUPFAM" id="SSF50156">
    <property type="entry name" value="PDZ domain-like"/>
    <property type="match status" value="1"/>
</dbReference>
<dbReference type="PROSITE" id="PS00478">
    <property type="entry name" value="LIM_DOMAIN_1"/>
    <property type="match status" value="1"/>
</dbReference>
<dbReference type="PROSITE" id="PS50023">
    <property type="entry name" value="LIM_DOMAIN_2"/>
    <property type="match status" value="1"/>
</dbReference>
<dbReference type="PROSITE" id="PS50106">
    <property type="entry name" value="PDZ"/>
    <property type="match status" value="1"/>
</dbReference>
<gene>
    <name type="primary">PDLIM3</name>
    <name type="synonym">ALP</name>
</gene>
<protein>
    <recommendedName>
        <fullName>PDZ and LIM domain protein 3</fullName>
    </recommendedName>
    <alternativeName>
        <fullName>Actinin-associated LIM protein</fullName>
    </alternativeName>
    <alternativeName>
        <fullName>Alpha-actinin-2-associated LIM protein</fullName>
    </alternativeName>
</protein>